<protein>
    <recommendedName>
        <fullName>Putative lipoprotein LppK</fullName>
    </recommendedName>
</protein>
<feature type="signal peptide" evidence="1">
    <location>
        <begin position="1"/>
        <end position="22"/>
    </location>
</feature>
<feature type="chain" id="PRO_0000018111" description="Putative lipoprotein LppK">
    <location>
        <begin position="23"/>
        <end position="189"/>
    </location>
</feature>
<feature type="region of interest" description="Disordered" evidence="2">
    <location>
        <begin position="26"/>
        <end position="49"/>
    </location>
</feature>
<feature type="region of interest" description="Disordered" evidence="2">
    <location>
        <begin position="166"/>
        <end position="189"/>
    </location>
</feature>
<feature type="compositionally biased region" description="Low complexity" evidence="2">
    <location>
        <begin position="169"/>
        <end position="179"/>
    </location>
</feature>
<feature type="compositionally biased region" description="Pro residues" evidence="2">
    <location>
        <begin position="180"/>
        <end position="189"/>
    </location>
</feature>
<feature type="lipid moiety-binding region" description="N-palmitoyl cysteine" evidence="1">
    <location>
        <position position="23"/>
    </location>
</feature>
<feature type="lipid moiety-binding region" description="S-diacylglycerol cysteine" evidence="1">
    <location>
        <position position="23"/>
    </location>
</feature>
<organism>
    <name type="scientific">Mycobacterium tuberculosis (strain ATCC 25618 / H37Rv)</name>
    <dbReference type="NCBI Taxonomy" id="83332"/>
    <lineage>
        <taxon>Bacteria</taxon>
        <taxon>Bacillati</taxon>
        <taxon>Actinomycetota</taxon>
        <taxon>Actinomycetes</taxon>
        <taxon>Mycobacteriales</taxon>
        <taxon>Mycobacteriaceae</taxon>
        <taxon>Mycobacterium</taxon>
        <taxon>Mycobacterium tuberculosis complex</taxon>
    </lineage>
</organism>
<name>LPPK_MYCTU</name>
<comment type="subcellular location">
    <subcellularLocation>
        <location evidence="1">Cell membrane</location>
        <topology evidence="1">Lipid-anchor</topology>
    </subcellularLocation>
</comment>
<comment type="similarity">
    <text evidence="3">Belongs to the MTB12 family.</text>
</comment>
<proteinExistence type="evidence at protein level"/>
<keyword id="KW-1003">Cell membrane</keyword>
<keyword id="KW-0449">Lipoprotein</keyword>
<keyword id="KW-0472">Membrane</keyword>
<keyword id="KW-0564">Palmitate</keyword>
<keyword id="KW-1185">Reference proteome</keyword>
<keyword id="KW-0732">Signal</keyword>
<evidence type="ECO:0000255" key="1">
    <source>
        <dbReference type="PROSITE-ProRule" id="PRU00303"/>
    </source>
</evidence>
<evidence type="ECO:0000256" key="2">
    <source>
        <dbReference type="SAM" id="MobiDB-lite"/>
    </source>
</evidence>
<evidence type="ECO:0000305" key="3"/>
<accession>P9WK75</accession>
<accession>L0TBK6</accession>
<accession>O33251</accession>
<accession>P65300</accession>
<sequence>MRRNIRVTLGAATIVAALGLSGCSHPEFKRSSPPAPSLPPVTSSPLEAAPITPLPAPEALIDVLSRLADPAVPGTNKVQLIEGATPENAAALDRFTTALRDGSYLPMTFAANDIAWSDNKPSDVMATVVVTTAHPDNREFTFPMEFVSFKGGWQLSRQTAEMLLAMGNSPDSTPSATSPAPAPSPTPPG</sequence>
<reference key="1">
    <citation type="journal article" date="1998" name="Nature">
        <title>Deciphering the biology of Mycobacterium tuberculosis from the complete genome sequence.</title>
        <authorList>
            <person name="Cole S.T."/>
            <person name="Brosch R."/>
            <person name="Parkhill J."/>
            <person name="Garnier T."/>
            <person name="Churcher C.M."/>
            <person name="Harris D.E."/>
            <person name="Gordon S.V."/>
            <person name="Eiglmeier K."/>
            <person name="Gas S."/>
            <person name="Barry C.E. III"/>
            <person name="Tekaia F."/>
            <person name="Badcock K."/>
            <person name="Basham D."/>
            <person name="Brown D."/>
            <person name="Chillingworth T."/>
            <person name="Connor R."/>
            <person name="Davies R.M."/>
            <person name="Devlin K."/>
            <person name="Feltwell T."/>
            <person name="Gentles S."/>
            <person name="Hamlin N."/>
            <person name="Holroyd S."/>
            <person name="Hornsby T."/>
            <person name="Jagels K."/>
            <person name="Krogh A."/>
            <person name="McLean J."/>
            <person name="Moule S."/>
            <person name="Murphy L.D."/>
            <person name="Oliver S."/>
            <person name="Osborne J."/>
            <person name="Quail M.A."/>
            <person name="Rajandream M.A."/>
            <person name="Rogers J."/>
            <person name="Rutter S."/>
            <person name="Seeger K."/>
            <person name="Skelton S."/>
            <person name="Squares S."/>
            <person name="Squares R."/>
            <person name="Sulston J.E."/>
            <person name="Taylor K."/>
            <person name="Whitehead S."/>
            <person name="Barrell B.G."/>
        </authorList>
    </citation>
    <scope>NUCLEOTIDE SEQUENCE [LARGE SCALE GENOMIC DNA]</scope>
    <source>
        <strain>ATCC 25618 / H37Rv</strain>
    </source>
</reference>
<reference key="2">
    <citation type="journal article" date="2011" name="Mol. Cell. Proteomics">
        <title>Proteogenomic analysis of Mycobacterium tuberculosis by high resolution mass spectrometry.</title>
        <authorList>
            <person name="Kelkar D.S."/>
            <person name="Kumar D."/>
            <person name="Kumar P."/>
            <person name="Balakrishnan L."/>
            <person name="Muthusamy B."/>
            <person name="Yadav A.K."/>
            <person name="Shrivastava P."/>
            <person name="Marimuthu A."/>
            <person name="Anand S."/>
            <person name="Sundaram H."/>
            <person name="Kingsbury R."/>
            <person name="Harsha H.C."/>
            <person name="Nair B."/>
            <person name="Prasad T.S."/>
            <person name="Chauhan D.S."/>
            <person name="Katoch K."/>
            <person name="Katoch V.M."/>
            <person name="Kumar P."/>
            <person name="Chaerkady R."/>
            <person name="Ramachandran S."/>
            <person name="Dash D."/>
            <person name="Pandey A."/>
        </authorList>
    </citation>
    <scope>IDENTIFICATION BY MASS SPECTROMETRY [LARGE SCALE ANALYSIS]</scope>
    <source>
        <strain>ATCC 25618 / H37Rv</strain>
    </source>
</reference>
<gene>
    <name type="primary">lppK</name>
    <name type="ordered locus">Rv2116</name>
    <name type="ORF">MTCY261.12</name>
</gene>
<dbReference type="EMBL" id="AL123456">
    <property type="protein sequence ID" value="CCP44891.1"/>
    <property type="molecule type" value="Genomic_DNA"/>
</dbReference>
<dbReference type="PIR" id="G70512">
    <property type="entry name" value="G70512"/>
</dbReference>
<dbReference type="RefSeq" id="NP_216632.1">
    <property type="nucleotide sequence ID" value="NC_000962.3"/>
</dbReference>
<dbReference type="RefSeq" id="WP_003900470.1">
    <property type="nucleotide sequence ID" value="NZ_NVQJ01000058.1"/>
</dbReference>
<dbReference type="SMR" id="P9WK75"/>
<dbReference type="STRING" id="83332.Rv2116"/>
<dbReference type="PaxDb" id="83332-Rv2116"/>
<dbReference type="DNASU" id="886029"/>
<dbReference type="GeneID" id="886029"/>
<dbReference type="KEGG" id="mtu:Rv2116"/>
<dbReference type="KEGG" id="mtv:RVBD_2116"/>
<dbReference type="TubercuList" id="Rv2116"/>
<dbReference type="eggNOG" id="ENOG5030NVW">
    <property type="taxonomic scope" value="Bacteria"/>
</dbReference>
<dbReference type="InParanoid" id="P9WK75"/>
<dbReference type="OrthoDB" id="4752301at2"/>
<dbReference type="Proteomes" id="UP000001584">
    <property type="component" value="Chromosome"/>
</dbReference>
<dbReference type="GO" id="GO:0005886">
    <property type="term" value="C:plasma membrane"/>
    <property type="evidence" value="ECO:0007669"/>
    <property type="project" value="UniProtKB-SubCell"/>
</dbReference>
<dbReference type="PROSITE" id="PS51257">
    <property type="entry name" value="PROKAR_LIPOPROTEIN"/>
    <property type="match status" value="1"/>
</dbReference>